<proteinExistence type="inferred from homology"/>
<evidence type="ECO:0000255" key="1">
    <source>
        <dbReference type="HAMAP-Rule" id="MF_00203"/>
    </source>
</evidence>
<sequence>MTSVSYRPEPGSIPTDPGVYTFRDAHERVIYVGKAKNLRARLSNYFQDLDQLHPRTRAMVQSANHVQWTVVSSELEALNLEYTWIKRFNPRFNVMYRDDKTYPMLAISVKEQIPRAFMYRGPRRKGVRYFGPYPKAWAIRETLESLTRVFPIRTCSAGVYRRHEALGRPCLLGYIDRCSAPCVGKITPEDHRALVDQFSSFLAGNTEPVLRRVRKEMEQASENLDFERAASLRDQLQAMQKSMERQAVVFSDNTDADLIAFVADELEAAVQIFHVRGGRIHGQRGWVVEREDLSEEKLVADFITQFYGETAELAKATETQVGGASGPEVDRDLARAINPAAAQDLGDLVGDVQVTPVPREILVHAMPDDADDLAAWLTSLRGSNMQIRVPQRGDKKALMTTAETNATQALAQHKLKRAGDITARSAALKELQEALWMDESPLRIECTDISHIQGTDVVASLVVFEDGLPKKADYRRYKIRDAAGDGHSDDVASIAEVVRRRFKRYQQDKSAVPAGDDAGDLLEGETELEDNSAEGTDPATEKRKFAYPPQLFIVDGGLPQVNAAQEVLDELGVNDVTLVGIAKRLEEIWVPGEEYPIIVPRNSPALYLVQNLRDEAHRFAITFHRQQRSARMRRSKLDDIPGLGPKRRKQLVKEFGSVARVKEASVEDIAALPGFGPKLAQLIHDALNAE</sequence>
<comment type="function">
    <text evidence="1">The UvrABC repair system catalyzes the recognition and processing of DNA lesions. UvrC both incises the 5' and 3' sides of the lesion. The N-terminal half is responsible for the 3' incision and the C-terminal half is responsible for the 5' incision.</text>
</comment>
<comment type="subunit">
    <text evidence="1">Interacts with UvrB in an incision complex.</text>
</comment>
<comment type="subcellular location">
    <subcellularLocation>
        <location evidence="1">Cytoplasm</location>
    </subcellularLocation>
</comment>
<comment type="similarity">
    <text evidence="1">Belongs to the UvrC family.</text>
</comment>
<feature type="chain" id="PRO_0000227420" description="UvrABC system protein C">
    <location>
        <begin position="1"/>
        <end position="690"/>
    </location>
</feature>
<feature type="domain" description="GIY-YIG" evidence="1">
    <location>
        <begin position="15"/>
        <end position="94"/>
    </location>
</feature>
<feature type="domain" description="UVR" evidence="1">
    <location>
        <begin position="207"/>
        <end position="242"/>
    </location>
</feature>
<keyword id="KW-0963">Cytoplasm</keyword>
<keyword id="KW-0227">DNA damage</keyword>
<keyword id="KW-0228">DNA excision</keyword>
<keyword id="KW-0234">DNA repair</keyword>
<keyword id="KW-0267">Excision nuclease</keyword>
<keyword id="KW-1185">Reference proteome</keyword>
<keyword id="KW-0742">SOS response</keyword>
<protein>
    <recommendedName>
        <fullName evidence="1">UvrABC system protein C</fullName>
        <shortName evidence="1">Protein UvrC</shortName>
    </recommendedName>
    <alternativeName>
        <fullName evidence="1">Excinuclease ABC subunit C</fullName>
    </alternativeName>
</protein>
<gene>
    <name evidence="1" type="primary">uvrC</name>
    <name type="ordered locus">jk1005</name>
</gene>
<reference key="1">
    <citation type="journal article" date="2005" name="J. Bacteriol.">
        <title>Complete genome sequence and analysis of the multiresistant nosocomial pathogen Corynebacterium jeikeium K411, a lipid-requiring bacterium of the human skin flora.</title>
        <authorList>
            <person name="Tauch A."/>
            <person name="Kaiser O."/>
            <person name="Hain T."/>
            <person name="Goesmann A."/>
            <person name="Weisshaar B."/>
            <person name="Albersmeier A."/>
            <person name="Bekel T."/>
            <person name="Bischoff N."/>
            <person name="Brune I."/>
            <person name="Chakraborty T."/>
            <person name="Kalinowski J."/>
            <person name="Meyer F."/>
            <person name="Rupp O."/>
            <person name="Schneiker S."/>
            <person name="Viehoever P."/>
            <person name="Puehler A."/>
        </authorList>
    </citation>
    <scope>NUCLEOTIDE SEQUENCE [LARGE SCALE GENOMIC DNA]</scope>
    <source>
        <strain>K411</strain>
    </source>
</reference>
<organism>
    <name type="scientific">Corynebacterium jeikeium (strain K411)</name>
    <dbReference type="NCBI Taxonomy" id="306537"/>
    <lineage>
        <taxon>Bacteria</taxon>
        <taxon>Bacillati</taxon>
        <taxon>Actinomycetota</taxon>
        <taxon>Actinomycetes</taxon>
        <taxon>Mycobacteriales</taxon>
        <taxon>Corynebacteriaceae</taxon>
        <taxon>Corynebacterium</taxon>
    </lineage>
</organism>
<dbReference type="EMBL" id="CR931997">
    <property type="protein sequence ID" value="CAI37169.1"/>
    <property type="molecule type" value="Genomic_DNA"/>
</dbReference>
<dbReference type="RefSeq" id="WP_011273577.1">
    <property type="nucleotide sequence ID" value="NC_007164.1"/>
</dbReference>
<dbReference type="SMR" id="Q4JVI8"/>
<dbReference type="STRING" id="306537.jk1005"/>
<dbReference type="KEGG" id="cjk:jk1005"/>
<dbReference type="PATRIC" id="fig|306537.10.peg.1017"/>
<dbReference type="eggNOG" id="COG0322">
    <property type="taxonomic scope" value="Bacteria"/>
</dbReference>
<dbReference type="HOGENOM" id="CLU_014841_3_2_11"/>
<dbReference type="OrthoDB" id="9804933at2"/>
<dbReference type="Proteomes" id="UP000000545">
    <property type="component" value="Chromosome"/>
</dbReference>
<dbReference type="GO" id="GO:0005737">
    <property type="term" value="C:cytoplasm"/>
    <property type="evidence" value="ECO:0007669"/>
    <property type="project" value="UniProtKB-SubCell"/>
</dbReference>
<dbReference type="GO" id="GO:0009380">
    <property type="term" value="C:excinuclease repair complex"/>
    <property type="evidence" value="ECO:0007669"/>
    <property type="project" value="InterPro"/>
</dbReference>
<dbReference type="GO" id="GO:0003677">
    <property type="term" value="F:DNA binding"/>
    <property type="evidence" value="ECO:0007669"/>
    <property type="project" value="UniProtKB-UniRule"/>
</dbReference>
<dbReference type="GO" id="GO:0009381">
    <property type="term" value="F:excinuclease ABC activity"/>
    <property type="evidence" value="ECO:0007669"/>
    <property type="project" value="UniProtKB-UniRule"/>
</dbReference>
<dbReference type="GO" id="GO:0006289">
    <property type="term" value="P:nucleotide-excision repair"/>
    <property type="evidence" value="ECO:0007669"/>
    <property type="project" value="UniProtKB-UniRule"/>
</dbReference>
<dbReference type="GO" id="GO:0009432">
    <property type="term" value="P:SOS response"/>
    <property type="evidence" value="ECO:0007669"/>
    <property type="project" value="UniProtKB-UniRule"/>
</dbReference>
<dbReference type="CDD" id="cd10434">
    <property type="entry name" value="GIY-YIG_UvrC_Cho"/>
    <property type="match status" value="1"/>
</dbReference>
<dbReference type="FunFam" id="3.40.1440.10:FF:000001">
    <property type="entry name" value="UvrABC system protein C"/>
    <property type="match status" value="1"/>
</dbReference>
<dbReference type="Gene3D" id="1.10.150.20">
    <property type="entry name" value="5' to 3' exonuclease, C-terminal subdomain"/>
    <property type="match status" value="1"/>
</dbReference>
<dbReference type="Gene3D" id="3.40.1440.10">
    <property type="entry name" value="GIY-YIG endonuclease"/>
    <property type="match status" value="1"/>
</dbReference>
<dbReference type="Gene3D" id="4.10.860.10">
    <property type="entry name" value="UVR domain"/>
    <property type="match status" value="1"/>
</dbReference>
<dbReference type="Gene3D" id="3.30.420.340">
    <property type="entry name" value="UvrC, RNAse H endonuclease domain"/>
    <property type="match status" value="1"/>
</dbReference>
<dbReference type="HAMAP" id="MF_00203">
    <property type="entry name" value="UvrC"/>
    <property type="match status" value="1"/>
</dbReference>
<dbReference type="InterPro" id="IPR000305">
    <property type="entry name" value="GIY-YIG_endonuc"/>
</dbReference>
<dbReference type="InterPro" id="IPR035901">
    <property type="entry name" value="GIY-YIG_endonuc_sf"/>
</dbReference>
<dbReference type="InterPro" id="IPR047296">
    <property type="entry name" value="GIY-YIG_UvrC_Cho"/>
</dbReference>
<dbReference type="InterPro" id="IPR003583">
    <property type="entry name" value="Hlx-hairpin-Hlx_DNA-bd_motif"/>
</dbReference>
<dbReference type="InterPro" id="IPR010994">
    <property type="entry name" value="RuvA_2-like"/>
</dbReference>
<dbReference type="InterPro" id="IPR001943">
    <property type="entry name" value="UVR_dom"/>
</dbReference>
<dbReference type="InterPro" id="IPR036876">
    <property type="entry name" value="UVR_dom_sf"/>
</dbReference>
<dbReference type="InterPro" id="IPR050066">
    <property type="entry name" value="UvrABC_protein_C"/>
</dbReference>
<dbReference type="InterPro" id="IPR004791">
    <property type="entry name" value="UvrC"/>
</dbReference>
<dbReference type="InterPro" id="IPR001162">
    <property type="entry name" value="UvrC_RNase_H_dom"/>
</dbReference>
<dbReference type="InterPro" id="IPR038476">
    <property type="entry name" value="UvrC_RNase_H_dom_sf"/>
</dbReference>
<dbReference type="NCBIfam" id="NF001824">
    <property type="entry name" value="PRK00558.1-5"/>
    <property type="match status" value="1"/>
</dbReference>
<dbReference type="NCBIfam" id="TIGR00194">
    <property type="entry name" value="uvrC"/>
    <property type="match status" value="1"/>
</dbReference>
<dbReference type="PANTHER" id="PTHR30562:SF1">
    <property type="entry name" value="UVRABC SYSTEM PROTEIN C"/>
    <property type="match status" value="1"/>
</dbReference>
<dbReference type="PANTHER" id="PTHR30562">
    <property type="entry name" value="UVRC/OXIDOREDUCTASE"/>
    <property type="match status" value="1"/>
</dbReference>
<dbReference type="Pfam" id="PF01541">
    <property type="entry name" value="GIY-YIG"/>
    <property type="match status" value="1"/>
</dbReference>
<dbReference type="Pfam" id="PF14520">
    <property type="entry name" value="HHH_5"/>
    <property type="match status" value="1"/>
</dbReference>
<dbReference type="Pfam" id="PF02151">
    <property type="entry name" value="UVR"/>
    <property type="match status" value="1"/>
</dbReference>
<dbReference type="Pfam" id="PF22920">
    <property type="entry name" value="UvrC_RNaseH"/>
    <property type="match status" value="2"/>
</dbReference>
<dbReference type="Pfam" id="PF08459">
    <property type="entry name" value="UvrC_RNaseH_dom"/>
    <property type="match status" value="1"/>
</dbReference>
<dbReference type="SMART" id="SM00465">
    <property type="entry name" value="GIYc"/>
    <property type="match status" value="1"/>
</dbReference>
<dbReference type="SMART" id="SM00278">
    <property type="entry name" value="HhH1"/>
    <property type="match status" value="2"/>
</dbReference>
<dbReference type="SUPFAM" id="SSF46600">
    <property type="entry name" value="C-terminal UvrC-binding domain of UvrB"/>
    <property type="match status" value="1"/>
</dbReference>
<dbReference type="SUPFAM" id="SSF82771">
    <property type="entry name" value="GIY-YIG endonuclease"/>
    <property type="match status" value="1"/>
</dbReference>
<dbReference type="SUPFAM" id="SSF47781">
    <property type="entry name" value="RuvA domain 2-like"/>
    <property type="match status" value="1"/>
</dbReference>
<dbReference type="PROSITE" id="PS50164">
    <property type="entry name" value="GIY_YIG"/>
    <property type="match status" value="1"/>
</dbReference>
<dbReference type="PROSITE" id="PS50151">
    <property type="entry name" value="UVR"/>
    <property type="match status" value="1"/>
</dbReference>
<dbReference type="PROSITE" id="PS50165">
    <property type="entry name" value="UVRC"/>
    <property type="match status" value="1"/>
</dbReference>
<accession>Q4JVI8</accession>
<name>UVRC_CORJK</name>